<protein>
    <recommendedName>
        <fullName>Major vault protein alpha</fullName>
        <shortName>MVP-alpha</shortName>
    </recommendedName>
</protein>
<feature type="initiator methionine" description="Removed" evidence="3">
    <location>
        <position position="1"/>
    </location>
</feature>
<feature type="chain" id="PRO_0000158985" description="Major vault protein alpha">
    <location>
        <begin position="2"/>
        <end position="843"/>
    </location>
</feature>
<feature type="repeat" description="MVP 1">
    <location>
        <begin position="2"/>
        <end position="56"/>
    </location>
</feature>
<feature type="repeat" description="MVP 2">
    <location>
        <begin position="57"/>
        <end position="111"/>
    </location>
</feature>
<feature type="repeat" description="MVP 3">
    <location>
        <begin position="112"/>
        <end position="163"/>
    </location>
</feature>
<feature type="repeat" description="MVP 4">
    <location>
        <begin position="164"/>
        <end position="216"/>
    </location>
</feature>
<feature type="repeat" description="MVP 5">
    <location>
        <begin position="217"/>
        <end position="272"/>
    </location>
</feature>
<feature type="repeat" description="MVP 6">
    <location>
        <begin position="273"/>
        <end position="324"/>
    </location>
</feature>
<feature type="repeat" description="MVP 7">
    <location>
        <begin position="325"/>
        <end position="376"/>
    </location>
</feature>
<feature type="repeat" description="MVP 8">
    <location>
        <begin position="377"/>
        <end position="442"/>
    </location>
</feature>
<feature type="repeat" description="MVP 9">
    <location>
        <begin position="443"/>
        <end position="505"/>
    </location>
</feature>
<feature type="region of interest" description="Disordered" evidence="2">
    <location>
        <begin position="643"/>
        <end position="663"/>
    </location>
</feature>
<feature type="compositionally biased region" description="Basic and acidic residues" evidence="2">
    <location>
        <begin position="646"/>
        <end position="663"/>
    </location>
</feature>
<feature type="modified residue" description="N-acetylalanine" evidence="3">
    <location>
        <position position="2"/>
    </location>
</feature>
<organism>
    <name type="scientific">Dictyostelium discoideum</name>
    <name type="common">Social amoeba</name>
    <dbReference type="NCBI Taxonomy" id="44689"/>
    <lineage>
        <taxon>Eukaryota</taxon>
        <taxon>Amoebozoa</taxon>
        <taxon>Evosea</taxon>
        <taxon>Eumycetozoa</taxon>
        <taxon>Dictyostelia</taxon>
        <taxon>Dictyosteliales</taxon>
        <taxon>Dictyosteliaceae</taxon>
        <taxon>Dictyostelium</taxon>
    </lineage>
</organism>
<accession>P34118</accession>
<accession>Q55D21</accession>
<name>MVPA_DICDI</name>
<sequence>MADLNSVIRIKPFHFIHVLDNNTNVTRVEVGPQTFTRQDHEKLVSGPEPMIMIPQRNYCTISNPVVRNENGSLVLDEYGQVKLRHGDEEIRFSQEPFPLYPGEKISGKVTALQVVAPLKALRLRALRDFTEAKVTHVAGDEWLFEGPATYLPRIDVRIEEEIKATIIGPNQALKLRANKACSDRSGVARKAGEEWLVRQHGAYLPGVDEKVVEIVNAYVLTDKKALHLKATKTFLDETRKTQRKAGEEWLVVSTDAETHIPDVYEQVVGEVHITTLSNRQYCVVLDPIGANGKPQLGHKQLRKGELAFFLNPGESLEGNKIHNIYVLTEQEALLLRAKETFSIDGESHLAGDRWMIYGPCDYVPPVQVEVVEKRESIPLDENEGIYVRDIKTGKVASIKGQSYMLKANEELWEKVLPRTVEEVLAKESLNPEFTDNRDSTRVVTYRAPHNSAVQIYDYKEKKSRVVFGPDLVMLGPDEHFTVLSLSGDKPKRPHQIKAIALFLGPDFMTDVVIVETSDHARLSLKLSYNWEFKVDRSKIEDAQKIFQVPDFVGDSCKAIASRVRGAVAAVSFDDFHKRSAEVIRQSVFGLDESGEVRKNFSFNSNNLVITNIDIQSVEPVDQRTRDSLQKSVQLAIEITTKSQEAAARHEAERLEQGARGRLERQKIHDEAQAELARKDLLQLQAQSAAVESTGQATAEAQATAEAANIAAEANVKQAELKAQATKIRSESEISLLKAKRENELSYQKSIDELELTKQSDLAEIEASKFKAIVESIGRDTLKSIACAGNEMQAKLLQGLGLKSFMITDGKSPLNLFDTANGIIGNNNQMVNMSNAAKQSGRRN</sequence>
<proteinExistence type="evidence at protein level"/>
<gene>
    <name type="primary">mvpA</name>
    <name type="ORF">DDB_G0269156</name>
</gene>
<dbReference type="EMBL" id="L08646">
    <property type="protein sequence ID" value="AAA03153.1"/>
    <property type="molecule type" value="mRNA"/>
</dbReference>
<dbReference type="EMBL" id="AAFI02000005">
    <property type="protein sequence ID" value="EAL71928.1"/>
    <property type="molecule type" value="Genomic_DNA"/>
</dbReference>
<dbReference type="PIR" id="A47132">
    <property type="entry name" value="A47132"/>
</dbReference>
<dbReference type="RefSeq" id="XP_646310.1">
    <property type="nucleotide sequence ID" value="XM_641218.1"/>
</dbReference>
<dbReference type="SMR" id="P34118"/>
<dbReference type="FunCoup" id="P34118">
    <property type="interactions" value="2"/>
</dbReference>
<dbReference type="IntAct" id="P34118">
    <property type="interactions" value="1"/>
</dbReference>
<dbReference type="STRING" id="44689.P34118"/>
<dbReference type="PaxDb" id="44689-DDB0191259"/>
<dbReference type="EnsemblProtists" id="EAL71928">
    <property type="protein sequence ID" value="EAL71928"/>
    <property type="gene ID" value="DDB_G0269156"/>
</dbReference>
<dbReference type="GeneID" id="8617265"/>
<dbReference type="KEGG" id="ddi:DDB_G0269156"/>
<dbReference type="dictyBase" id="DDB_G0269156">
    <property type="gene designation" value="mvpA"/>
</dbReference>
<dbReference type="VEuPathDB" id="AmoebaDB:DDB_G0269156"/>
<dbReference type="eggNOG" id="ENOG502QPP0">
    <property type="taxonomic scope" value="Eukaryota"/>
</dbReference>
<dbReference type="HOGENOM" id="CLU_016171_0_0_1"/>
<dbReference type="InParanoid" id="P34118"/>
<dbReference type="OMA" id="VTYRAPH"/>
<dbReference type="PhylomeDB" id="P34118"/>
<dbReference type="Reactome" id="R-DDI-6798695">
    <property type="pathway name" value="Neutrophil degranulation"/>
</dbReference>
<dbReference type="PRO" id="PR:P34118"/>
<dbReference type="Proteomes" id="UP000002195">
    <property type="component" value="Chromosome 1"/>
</dbReference>
<dbReference type="GO" id="GO:0005737">
    <property type="term" value="C:cytoplasm"/>
    <property type="evidence" value="ECO:0000318"/>
    <property type="project" value="GO_Central"/>
</dbReference>
<dbReference type="GO" id="GO:0005634">
    <property type="term" value="C:nucleus"/>
    <property type="evidence" value="ECO:0000314"/>
    <property type="project" value="dictyBase"/>
</dbReference>
<dbReference type="GO" id="GO:0045335">
    <property type="term" value="C:phagocytic vesicle"/>
    <property type="evidence" value="ECO:0007005"/>
    <property type="project" value="dictyBase"/>
</dbReference>
<dbReference type="GO" id="GO:1990904">
    <property type="term" value="C:ribonucleoprotein complex"/>
    <property type="evidence" value="ECO:0000304"/>
    <property type="project" value="dictyBase"/>
</dbReference>
<dbReference type="GO" id="GO:0009617">
    <property type="term" value="P:response to bacterium"/>
    <property type="evidence" value="ECO:0007007"/>
    <property type="project" value="dictyBase"/>
</dbReference>
<dbReference type="CDD" id="cd08825">
    <property type="entry name" value="MVP_shoulder"/>
    <property type="match status" value="1"/>
</dbReference>
<dbReference type="FunFam" id="2.30.30.560:FF:000002">
    <property type="entry name" value="Major vault protein-alpha"/>
    <property type="match status" value="1"/>
</dbReference>
<dbReference type="FunFam" id="2.30.30.570:FF:000002">
    <property type="entry name" value="Major vault protein-alpha"/>
    <property type="match status" value="1"/>
</dbReference>
<dbReference type="FunFam" id="2.30.30.550:FF:000001">
    <property type="entry name" value="major vault protein-like"/>
    <property type="match status" value="3"/>
</dbReference>
<dbReference type="FunFam" id="2.30.30.560:FF:000001">
    <property type="entry name" value="major vault protein-like"/>
    <property type="match status" value="1"/>
</dbReference>
<dbReference type="FunFam" id="2.30.30.570:FF:000001">
    <property type="entry name" value="major vault protein-like"/>
    <property type="match status" value="1"/>
</dbReference>
<dbReference type="FunFam" id="3.30.479.30:FF:000010">
    <property type="entry name" value="major vault protein-like"/>
    <property type="match status" value="1"/>
</dbReference>
<dbReference type="FunFam" id="2.30.30.620:FF:000003">
    <property type="entry name" value="Major vault protein-like protein"/>
    <property type="match status" value="1"/>
</dbReference>
<dbReference type="Gene3D" id="2.30.30.560">
    <property type="match status" value="2"/>
</dbReference>
<dbReference type="Gene3D" id="2.30.30.570">
    <property type="match status" value="2"/>
</dbReference>
<dbReference type="Gene3D" id="2.30.30.620">
    <property type="match status" value="1"/>
</dbReference>
<dbReference type="Gene3D" id="6.10.250.720">
    <property type="match status" value="1"/>
</dbReference>
<dbReference type="Gene3D" id="6.20.380.10">
    <property type="match status" value="1"/>
</dbReference>
<dbReference type="Gene3D" id="3.30.479.30">
    <property type="entry name" value="Band 7 domain"/>
    <property type="match status" value="1"/>
</dbReference>
<dbReference type="Gene3D" id="2.30.30.550">
    <property type="entry name" value="Major Vault Protein repeat"/>
    <property type="match status" value="4"/>
</dbReference>
<dbReference type="InterPro" id="IPR036013">
    <property type="entry name" value="Band_7/SPFH_dom_sf"/>
</dbReference>
<dbReference type="InterPro" id="IPR039059">
    <property type="entry name" value="MVP"/>
</dbReference>
<dbReference type="InterPro" id="IPR041139">
    <property type="entry name" value="MVP_rep_dom"/>
</dbReference>
<dbReference type="InterPro" id="IPR043023">
    <property type="entry name" value="MVP_rep_sf"/>
</dbReference>
<dbReference type="InterPro" id="IPR021870">
    <property type="entry name" value="MVP_shoulder"/>
</dbReference>
<dbReference type="InterPro" id="IPR041134">
    <property type="entry name" value="Vault_2"/>
</dbReference>
<dbReference type="InterPro" id="IPR043179">
    <property type="entry name" value="Vault_2_sf"/>
</dbReference>
<dbReference type="InterPro" id="IPR040989">
    <property type="entry name" value="Vault_3"/>
</dbReference>
<dbReference type="InterPro" id="IPR041136">
    <property type="entry name" value="Vault_4"/>
</dbReference>
<dbReference type="InterPro" id="IPR002499">
    <property type="entry name" value="Vault_N"/>
</dbReference>
<dbReference type="PANTHER" id="PTHR14165">
    <property type="entry name" value="MAJOR VAULT PROTEIN"/>
    <property type="match status" value="1"/>
</dbReference>
<dbReference type="PANTHER" id="PTHR14165:SF3">
    <property type="entry name" value="MAJOR VAULT PROTEIN"/>
    <property type="match status" value="1"/>
</dbReference>
<dbReference type="Pfam" id="PF11978">
    <property type="entry name" value="MVP_shoulder"/>
    <property type="match status" value="1"/>
</dbReference>
<dbReference type="Pfam" id="PF01505">
    <property type="entry name" value="Vault"/>
    <property type="match status" value="4"/>
</dbReference>
<dbReference type="Pfam" id="PF17794">
    <property type="entry name" value="Vault_2"/>
    <property type="match status" value="2"/>
</dbReference>
<dbReference type="Pfam" id="PF17795">
    <property type="entry name" value="Vault_3"/>
    <property type="match status" value="1"/>
</dbReference>
<dbReference type="Pfam" id="PF17796">
    <property type="entry name" value="Vault_4"/>
    <property type="match status" value="1"/>
</dbReference>
<dbReference type="PROSITE" id="PS51224">
    <property type="entry name" value="MVP"/>
    <property type="match status" value="8"/>
</dbReference>
<comment type="function">
    <text>Unknown, though MVP-alpha is required for normal vault structure.</text>
</comment>
<comment type="subunit">
    <text>The vault ribonucleoprotein particle is a huge (400 A x 670 A) cage structure of 12.9 MDa. It consists of a dimer of half-vaults, with each half-vault comprising 39 identical major vault protein (MVP) chains. Dictyostelium is one of the few organisms in which the major component is actually two proteins (alpha and beta).</text>
</comment>
<comment type="subcellular location">
    <subcellularLocation>
        <location>Cytoplasm</location>
    </subcellularLocation>
    <subcellularLocation>
        <location evidence="1">Nucleus</location>
    </subcellularLocation>
</comment>
<evidence type="ECO:0000250" key="1"/>
<evidence type="ECO:0000256" key="2">
    <source>
        <dbReference type="SAM" id="MobiDB-lite"/>
    </source>
</evidence>
<evidence type="ECO:0000269" key="3">
    <source ref="3"/>
</evidence>
<reference key="1">
    <citation type="journal article" date="1993" name="J. Biol. Chem.">
        <title>cDNA cloning and disruption of the major vault protein alpha gene (mvpA) in Dictyostelium discoideum.</title>
        <authorList>
            <person name="Vasu S.K."/>
            <person name="Kedersha N.L."/>
            <person name="Rome L.H."/>
        </authorList>
    </citation>
    <scope>NUCLEOTIDE SEQUENCE [MRNA]</scope>
    <scope>PROTEIN SEQUENCE OF 423-444</scope>
    <source>
        <strain>AX4</strain>
    </source>
</reference>
<reference key="2">
    <citation type="journal article" date="2005" name="Nature">
        <title>The genome of the social amoeba Dictyostelium discoideum.</title>
        <authorList>
            <person name="Eichinger L."/>
            <person name="Pachebat J.A."/>
            <person name="Gloeckner G."/>
            <person name="Rajandream M.A."/>
            <person name="Sucgang R."/>
            <person name="Berriman M."/>
            <person name="Song J."/>
            <person name="Olsen R."/>
            <person name="Szafranski K."/>
            <person name="Xu Q."/>
            <person name="Tunggal B."/>
            <person name="Kummerfeld S."/>
            <person name="Madera M."/>
            <person name="Konfortov B.A."/>
            <person name="Rivero F."/>
            <person name="Bankier A.T."/>
            <person name="Lehmann R."/>
            <person name="Hamlin N."/>
            <person name="Davies R."/>
            <person name="Gaudet P."/>
            <person name="Fey P."/>
            <person name="Pilcher K."/>
            <person name="Chen G."/>
            <person name="Saunders D."/>
            <person name="Sodergren E.J."/>
            <person name="Davis P."/>
            <person name="Kerhornou A."/>
            <person name="Nie X."/>
            <person name="Hall N."/>
            <person name="Anjard C."/>
            <person name="Hemphill L."/>
            <person name="Bason N."/>
            <person name="Farbrother P."/>
            <person name="Desany B."/>
            <person name="Just E."/>
            <person name="Morio T."/>
            <person name="Rost R."/>
            <person name="Churcher C.M."/>
            <person name="Cooper J."/>
            <person name="Haydock S."/>
            <person name="van Driessche N."/>
            <person name="Cronin A."/>
            <person name="Goodhead I."/>
            <person name="Muzny D.M."/>
            <person name="Mourier T."/>
            <person name="Pain A."/>
            <person name="Lu M."/>
            <person name="Harper D."/>
            <person name="Lindsay R."/>
            <person name="Hauser H."/>
            <person name="James K.D."/>
            <person name="Quiles M."/>
            <person name="Madan Babu M."/>
            <person name="Saito T."/>
            <person name="Buchrieser C."/>
            <person name="Wardroper A."/>
            <person name="Felder M."/>
            <person name="Thangavelu M."/>
            <person name="Johnson D."/>
            <person name="Knights A."/>
            <person name="Loulseged H."/>
            <person name="Mungall K.L."/>
            <person name="Oliver K."/>
            <person name="Price C."/>
            <person name="Quail M.A."/>
            <person name="Urushihara H."/>
            <person name="Hernandez J."/>
            <person name="Rabbinowitsch E."/>
            <person name="Steffen D."/>
            <person name="Sanders M."/>
            <person name="Ma J."/>
            <person name="Kohara Y."/>
            <person name="Sharp S."/>
            <person name="Simmonds M.N."/>
            <person name="Spiegler S."/>
            <person name="Tivey A."/>
            <person name="Sugano S."/>
            <person name="White B."/>
            <person name="Walker D."/>
            <person name="Woodward J.R."/>
            <person name="Winckler T."/>
            <person name="Tanaka Y."/>
            <person name="Shaulsky G."/>
            <person name="Schleicher M."/>
            <person name="Weinstock G.M."/>
            <person name="Rosenthal A."/>
            <person name="Cox E.C."/>
            <person name="Chisholm R.L."/>
            <person name="Gibbs R.A."/>
            <person name="Loomis W.F."/>
            <person name="Platzer M."/>
            <person name="Kay R.R."/>
            <person name="Williams J.G."/>
            <person name="Dear P.H."/>
            <person name="Noegel A.A."/>
            <person name="Barrell B.G."/>
            <person name="Kuspa A."/>
        </authorList>
    </citation>
    <scope>NUCLEOTIDE SEQUENCE [LARGE SCALE GENOMIC DNA]</scope>
    <source>
        <strain>AX4</strain>
    </source>
</reference>
<reference key="3">
    <citation type="submission" date="2007-07" db="UniProtKB">
        <authorList>
            <person name="Bienvenut W.V."/>
            <person name="Patel H."/>
            <person name="Brunton V.G."/>
            <person name="Frame M.C."/>
        </authorList>
    </citation>
    <scope>PROTEIN SEQUENCE OF 2-9; 28-37; 109-119; 164-174; 667-677; 749-757; 771-778 AND 795-810</scope>
    <scope>CLEAVAGE OF INITIATOR METHIONINE</scope>
    <scope>ACETYLATION AT ALA-2</scope>
    <scope>IDENTIFICATION BY MASS SPECTROMETRY</scope>
</reference>
<reference key="4">
    <citation type="journal article" date="2006" name="J. Proteome Res.">
        <title>Identification of novel centrosomal proteins in Dictyostelium discoideum by comparative proteomic approaches.</title>
        <authorList>
            <person name="Reinders Y."/>
            <person name="Schulz I."/>
            <person name="Graef R."/>
            <person name="Sickmann A."/>
        </authorList>
    </citation>
    <scope>IDENTIFICATION BY MASS SPECTROMETRY [LARGE SCALE ANALYSIS]</scope>
</reference>
<reference key="5">
    <citation type="journal article" date="2006" name="Mol. Cell. Proteomics">
        <title>Proteomics fingerprinting of phagosome maturation and evidence for the role of a Galpha during uptake.</title>
        <authorList>
            <person name="Gotthardt D."/>
            <person name="Blancheteau V."/>
            <person name="Bosserhoff A."/>
            <person name="Ruppert T."/>
            <person name="Delorenzi M."/>
            <person name="Soldati T."/>
        </authorList>
    </citation>
    <scope>IDENTIFICATION BY MASS SPECTROMETRY [LARGE SCALE ANALYSIS]</scope>
    <source>
        <strain>AX2</strain>
    </source>
</reference>
<keyword id="KW-0007">Acetylation</keyword>
<keyword id="KW-0963">Cytoplasm</keyword>
<keyword id="KW-0903">Direct protein sequencing</keyword>
<keyword id="KW-0539">Nucleus</keyword>
<keyword id="KW-1185">Reference proteome</keyword>
<keyword id="KW-0677">Repeat</keyword>
<keyword id="KW-0687">Ribonucleoprotein</keyword>